<comment type="catalytic activity">
    <reaction evidence="1">
        <text>Hydrolysis of terminal, non-reducing beta-D-glucosyl residues with release of beta-D-glucose.</text>
        <dbReference type="EC" id="3.2.1.21"/>
    </reaction>
</comment>
<comment type="biophysicochemical properties">
    <kinetics>
        <KM evidence="1">0.18 mM for pNPG</KM>
    </kinetics>
    <phDependence>
        <text evidence="1">Optimum pH is 6.0.</text>
    </phDependence>
    <temperatureDependence>
        <text evidence="1">Optimum temperature is 45 degrees Celsius.</text>
    </temperatureDependence>
</comment>
<accession>P85516</accession>
<reference evidence="2" key="1">
    <citation type="submission" date="2008-03" db="UniProtKB">
        <authorList>
            <person name="Zhao X.S."/>
            <person name="Gao L."/>
            <person name="Wang J."/>
            <person name="Du X.L."/>
            <person name="Gao J."/>
            <person name="Zhou Y.F."/>
            <person name="Tai G.H."/>
        </authorList>
    </citation>
    <scope>PROTEIN SEQUENCE</scope>
    <scope>CATALYTIC ACTIVITY</scope>
    <scope>BIOPHYSICOCHEMICAL PROPERTIES</scope>
</reference>
<name>BGL1_PASFU</name>
<feature type="chain" id="PRO_0000370227" description="Beta-glucosidase 1">
    <location>
        <begin position="1" status="less than"/>
        <end position="40" status="greater than"/>
    </location>
</feature>
<feature type="non-consecutive residues" evidence="2">
    <location>
        <begin position="9"/>
        <end position="10"/>
    </location>
</feature>
<feature type="non-consecutive residues" evidence="2">
    <location>
        <begin position="24"/>
        <end position="25"/>
    </location>
</feature>
<feature type="non-terminal residue">
    <location>
        <position position="1"/>
    </location>
</feature>
<feature type="non-terminal residue">
    <location>
        <position position="40"/>
    </location>
</feature>
<sequence>LVAHEENVRVGKDEGFAKAGGLSRLPLEAGESGTATFNVR</sequence>
<protein>
    <recommendedName>
        <fullName>Beta-glucosidase 1</fullName>
        <ecNumber>3.2.1.21</ecNumber>
    </recommendedName>
    <alternativeName>
        <fullName>Beta-D-glucoside glucohydrolase</fullName>
    </alternativeName>
    <alternativeName>
        <fullName>Cellobiase</fullName>
    </alternativeName>
    <alternativeName>
        <fullName>Gentiobiase</fullName>
    </alternativeName>
</protein>
<organism>
    <name type="scientific">Passalora fulva</name>
    <name type="common">Tomato leaf mold</name>
    <name type="synonym">Cladosporium fulvum</name>
    <dbReference type="NCBI Taxonomy" id="5499"/>
    <lineage>
        <taxon>Eukaryota</taxon>
        <taxon>Fungi</taxon>
        <taxon>Dikarya</taxon>
        <taxon>Ascomycota</taxon>
        <taxon>Pezizomycotina</taxon>
        <taxon>Dothideomycetes</taxon>
        <taxon>Dothideomycetidae</taxon>
        <taxon>Mycosphaerellales</taxon>
        <taxon>Mycosphaerellaceae</taxon>
        <taxon>Fulvia</taxon>
    </lineage>
</organism>
<dbReference type="EC" id="3.2.1.21"/>
<dbReference type="GO" id="GO:0008422">
    <property type="term" value="F:beta-glucosidase activity"/>
    <property type="evidence" value="ECO:0007669"/>
    <property type="project" value="UniProtKB-EC"/>
</dbReference>
<dbReference type="GO" id="GO:0030245">
    <property type="term" value="P:cellulose catabolic process"/>
    <property type="evidence" value="ECO:0007669"/>
    <property type="project" value="UniProtKB-KW"/>
</dbReference>
<keyword id="KW-0119">Carbohydrate metabolism</keyword>
<keyword id="KW-0136">Cellulose degradation</keyword>
<keyword id="KW-0903">Direct protein sequencing</keyword>
<keyword id="KW-0326">Glycosidase</keyword>
<keyword id="KW-0378">Hydrolase</keyword>
<keyword id="KW-0624">Polysaccharide degradation</keyword>
<proteinExistence type="evidence at protein level"/>
<evidence type="ECO:0000269" key="1">
    <source ref="1"/>
</evidence>
<evidence type="ECO:0000305" key="2"/>